<sequence length="105" mass="12111">MATLQQQKIRIRLQAFDRRLLDTSCEKIVDTANRTNATAIGPIPLPTKRKIYCVLRSPHVDKDSREHFETRTHRRIIDIYQPSSKTIDALMKLDLPSGVDIEVKL</sequence>
<evidence type="ECO:0000255" key="1">
    <source>
        <dbReference type="HAMAP-Rule" id="MF_00508"/>
    </source>
</evidence>
<evidence type="ECO:0000305" key="2"/>
<gene>
    <name evidence="1" type="primary">rpsJ</name>
    <name evidence="1" type="synonym">rps10</name>
    <name type="ordered locus">all4336</name>
</gene>
<proteinExistence type="inferred from homology"/>
<name>RS10_NOSS1</name>
<dbReference type="EMBL" id="BA000019">
    <property type="protein sequence ID" value="BAB76035.1"/>
    <property type="molecule type" value="Genomic_DNA"/>
</dbReference>
<dbReference type="PIR" id="AI2347">
    <property type="entry name" value="AI2347"/>
</dbReference>
<dbReference type="RefSeq" id="WP_010998474.1">
    <property type="nucleotide sequence ID" value="NZ_RSCN01000027.1"/>
</dbReference>
<dbReference type="SMR" id="Q8YP64"/>
<dbReference type="STRING" id="103690.gene:10496385"/>
<dbReference type="GeneID" id="58723954"/>
<dbReference type="KEGG" id="ana:all4336"/>
<dbReference type="eggNOG" id="COG0051">
    <property type="taxonomic scope" value="Bacteria"/>
</dbReference>
<dbReference type="OrthoDB" id="9804464at2"/>
<dbReference type="Proteomes" id="UP000002483">
    <property type="component" value="Chromosome"/>
</dbReference>
<dbReference type="GO" id="GO:1990904">
    <property type="term" value="C:ribonucleoprotein complex"/>
    <property type="evidence" value="ECO:0007669"/>
    <property type="project" value="UniProtKB-KW"/>
</dbReference>
<dbReference type="GO" id="GO:0005840">
    <property type="term" value="C:ribosome"/>
    <property type="evidence" value="ECO:0007669"/>
    <property type="project" value="UniProtKB-KW"/>
</dbReference>
<dbReference type="GO" id="GO:0003735">
    <property type="term" value="F:structural constituent of ribosome"/>
    <property type="evidence" value="ECO:0007669"/>
    <property type="project" value="InterPro"/>
</dbReference>
<dbReference type="GO" id="GO:0000049">
    <property type="term" value="F:tRNA binding"/>
    <property type="evidence" value="ECO:0007669"/>
    <property type="project" value="UniProtKB-UniRule"/>
</dbReference>
<dbReference type="GO" id="GO:0006412">
    <property type="term" value="P:translation"/>
    <property type="evidence" value="ECO:0007669"/>
    <property type="project" value="UniProtKB-UniRule"/>
</dbReference>
<dbReference type="FunFam" id="3.30.70.600:FF:000001">
    <property type="entry name" value="30S ribosomal protein S10"/>
    <property type="match status" value="1"/>
</dbReference>
<dbReference type="Gene3D" id="3.30.70.600">
    <property type="entry name" value="Ribosomal protein S10 domain"/>
    <property type="match status" value="1"/>
</dbReference>
<dbReference type="HAMAP" id="MF_00508">
    <property type="entry name" value="Ribosomal_uS10"/>
    <property type="match status" value="1"/>
</dbReference>
<dbReference type="InterPro" id="IPR001848">
    <property type="entry name" value="Ribosomal_uS10"/>
</dbReference>
<dbReference type="InterPro" id="IPR018268">
    <property type="entry name" value="Ribosomal_uS10_CS"/>
</dbReference>
<dbReference type="InterPro" id="IPR027486">
    <property type="entry name" value="Ribosomal_uS10_dom"/>
</dbReference>
<dbReference type="InterPro" id="IPR036838">
    <property type="entry name" value="Ribosomal_uS10_dom_sf"/>
</dbReference>
<dbReference type="NCBIfam" id="NF001861">
    <property type="entry name" value="PRK00596.1"/>
    <property type="match status" value="1"/>
</dbReference>
<dbReference type="NCBIfam" id="TIGR01049">
    <property type="entry name" value="rpsJ_bact"/>
    <property type="match status" value="1"/>
</dbReference>
<dbReference type="PANTHER" id="PTHR11700">
    <property type="entry name" value="30S RIBOSOMAL PROTEIN S10 FAMILY MEMBER"/>
    <property type="match status" value="1"/>
</dbReference>
<dbReference type="Pfam" id="PF00338">
    <property type="entry name" value="Ribosomal_S10"/>
    <property type="match status" value="1"/>
</dbReference>
<dbReference type="PRINTS" id="PR00971">
    <property type="entry name" value="RIBOSOMALS10"/>
</dbReference>
<dbReference type="SMART" id="SM01403">
    <property type="entry name" value="Ribosomal_S10"/>
    <property type="match status" value="1"/>
</dbReference>
<dbReference type="SUPFAM" id="SSF54999">
    <property type="entry name" value="Ribosomal protein S10"/>
    <property type="match status" value="1"/>
</dbReference>
<dbReference type="PROSITE" id="PS00361">
    <property type="entry name" value="RIBOSOMAL_S10"/>
    <property type="match status" value="1"/>
</dbReference>
<keyword id="KW-1185">Reference proteome</keyword>
<keyword id="KW-0687">Ribonucleoprotein</keyword>
<keyword id="KW-0689">Ribosomal protein</keyword>
<accession>Q8YP64</accession>
<feature type="chain" id="PRO_0000146486" description="Small ribosomal subunit protein uS10">
    <location>
        <begin position="1"/>
        <end position="105"/>
    </location>
</feature>
<organism>
    <name type="scientific">Nostoc sp. (strain PCC 7120 / SAG 25.82 / UTEX 2576)</name>
    <dbReference type="NCBI Taxonomy" id="103690"/>
    <lineage>
        <taxon>Bacteria</taxon>
        <taxon>Bacillati</taxon>
        <taxon>Cyanobacteriota</taxon>
        <taxon>Cyanophyceae</taxon>
        <taxon>Nostocales</taxon>
        <taxon>Nostocaceae</taxon>
        <taxon>Nostoc</taxon>
    </lineage>
</organism>
<reference key="1">
    <citation type="journal article" date="2001" name="DNA Res.">
        <title>Complete genomic sequence of the filamentous nitrogen-fixing cyanobacterium Anabaena sp. strain PCC 7120.</title>
        <authorList>
            <person name="Kaneko T."/>
            <person name="Nakamura Y."/>
            <person name="Wolk C.P."/>
            <person name="Kuritz T."/>
            <person name="Sasamoto S."/>
            <person name="Watanabe A."/>
            <person name="Iriguchi M."/>
            <person name="Ishikawa A."/>
            <person name="Kawashima K."/>
            <person name="Kimura T."/>
            <person name="Kishida Y."/>
            <person name="Kohara M."/>
            <person name="Matsumoto M."/>
            <person name="Matsuno A."/>
            <person name="Muraki A."/>
            <person name="Nakazaki N."/>
            <person name="Shimpo S."/>
            <person name="Sugimoto M."/>
            <person name="Takazawa M."/>
            <person name="Yamada M."/>
            <person name="Yasuda M."/>
            <person name="Tabata S."/>
        </authorList>
    </citation>
    <scope>NUCLEOTIDE SEQUENCE [LARGE SCALE GENOMIC DNA]</scope>
    <source>
        <strain>PCC 7120 / SAG 25.82 / UTEX 2576</strain>
    </source>
</reference>
<protein>
    <recommendedName>
        <fullName evidence="1">Small ribosomal subunit protein uS10</fullName>
    </recommendedName>
    <alternativeName>
        <fullName evidence="2">30S ribosomal protein S10</fullName>
    </alternativeName>
</protein>
<comment type="function">
    <text evidence="1">Involved in the binding of tRNA to the ribosomes.</text>
</comment>
<comment type="subunit">
    <text evidence="1">Part of the 30S ribosomal subunit.</text>
</comment>
<comment type="similarity">
    <text evidence="1">Belongs to the universal ribosomal protein uS10 family.</text>
</comment>